<feature type="chain" id="PRO_0000144192" description="Molybdenum-containing formylmethanofuran dehydrogenase 1 subunit C">
    <location>
        <begin position="1"/>
        <end position="400"/>
    </location>
</feature>
<feature type="repeat" description="1">
    <location>
        <begin position="76"/>
        <end position="88"/>
    </location>
</feature>
<feature type="repeat" description="2">
    <location>
        <begin position="95"/>
        <end position="107"/>
    </location>
</feature>
<feature type="repeat" description="3">
    <location>
        <begin position="114"/>
        <end position="126"/>
    </location>
</feature>
<feature type="repeat" description="4">
    <location>
        <begin position="140"/>
        <end position="152"/>
    </location>
</feature>
<feature type="repeat" description="5">
    <location>
        <begin position="159"/>
        <end position="171"/>
    </location>
</feature>
<feature type="repeat" description="6">
    <location>
        <begin position="178"/>
        <end position="190"/>
    </location>
</feature>
<feature type="repeat" description="7">
    <location>
        <begin position="197"/>
        <end position="209"/>
    </location>
</feature>
<feature type="region of interest" description="7 X 13 AA repeats of [GW]-X-X-M-X-X-G-X-I-X-[IV]-X-G">
    <location>
        <begin position="76"/>
        <end position="209"/>
    </location>
</feature>
<evidence type="ECO:0000250" key="1">
    <source>
        <dbReference type="UniProtKB" id="Q48943"/>
    </source>
</evidence>
<evidence type="ECO:0000305" key="2"/>
<protein>
    <recommendedName>
        <fullName>Molybdenum-containing formylmethanofuran dehydrogenase 1 subunit C</fullName>
        <ecNumber evidence="1">1.2.7.12</ecNumber>
    </recommendedName>
    <alternativeName>
        <fullName>Molybdenum-containing formylmethanofuran dehydrogenase I subunit C</fullName>
    </alternativeName>
</protein>
<dbReference type="EC" id="1.2.7.12" evidence="1"/>
<dbReference type="EMBL" id="AE000666">
    <property type="protein sequence ID" value="AAB85416.1"/>
    <property type="molecule type" value="Genomic_DNA"/>
</dbReference>
<dbReference type="PIR" id="H69222">
    <property type="entry name" value="H69222"/>
</dbReference>
<dbReference type="RefSeq" id="WP_010876551.1">
    <property type="nucleotide sequence ID" value="NC_000916.1"/>
</dbReference>
<dbReference type="SMR" id="O27002"/>
<dbReference type="STRING" id="187420.MTH_918"/>
<dbReference type="PaxDb" id="187420-MTH_918"/>
<dbReference type="EnsemblBacteria" id="AAB85416">
    <property type="protein sequence ID" value="AAB85416"/>
    <property type="gene ID" value="MTH_918"/>
</dbReference>
<dbReference type="KEGG" id="mth:MTH_918"/>
<dbReference type="PATRIC" id="fig|187420.15.peg.903"/>
<dbReference type="HOGENOM" id="CLU_661592_0_0_2"/>
<dbReference type="InParanoid" id="O27002"/>
<dbReference type="BioCyc" id="MetaCyc:FMDCMAUTO-MONOMER"/>
<dbReference type="UniPathway" id="UPA00640">
    <property type="reaction ID" value="UER00692"/>
</dbReference>
<dbReference type="Proteomes" id="UP000005223">
    <property type="component" value="Chromosome"/>
</dbReference>
<dbReference type="GO" id="GO:0018493">
    <property type="term" value="F:formylmethanofuran dehydrogenase activity"/>
    <property type="evidence" value="ECO:0007669"/>
    <property type="project" value="UniProtKB-EC"/>
</dbReference>
<dbReference type="GO" id="GO:0030151">
    <property type="term" value="F:molybdenum ion binding"/>
    <property type="evidence" value="ECO:0007669"/>
    <property type="project" value="InterPro"/>
</dbReference>
<dbReference type="GO" id="GO:0043546">
    <property type="term" value="F:molybdopterin cofactor binding"/>
    <property type="evidence" value="ECO:0007669"/>
    <property type="project" value="InterPro"/>
</dbReference>
<dbReference type="GO" id="GO:0019386">
    <property type="term" value="P:methanogenesis, from carbon dioxide"/>
    <property type="evidence" value="ECO:0007669"/>
    <property type="project" value="UniProtKB-UniPathway"/>
</dbReference>
<dbReference type="CDD" id="cd00980">
    <property type="entry name" value="FwdC/FmdC"/>
    <property type="match status" value="1"/>
</dbReference>
<dbReference type="CDD" id="cd02789">
    <property type="entry name" value="MopB_CT_FmdC-FwdD"/>
    <property type="match status" value="1"/>
</dbReference>
<dbReference type="Gene3D" id="2.40.40.20">
    <property type="match status" value="1"/>
</dbReference>
<dbReference type="Gene3D" id="2.160.20.60">
    <property type="entry name" value="Glutamate synthase, alpha subunit, C-terminal domain"/>
    <property type="match status" value="1"/>
</dbReference>
<dbReference type="InterPro" id="IPR009010">
    <property type="entry name" value="Asp_de-COase-like_dom_sf"/>
</dbReference>
<dbReference type="InterPro" id="IPR041717">
    <property type="entry name" value="FmdC/FwdD_MopB-bd"/>
</dbReference>
<dbReference type="InterPro" id="IPR012048">
    <property type="entry name" value="Formylmethanofuran_DH_csu/dsu"/>
</dbReference>
<dbReference type="InterPro" id="IPR017550">
    <property type="entry name" value="Formylmethanofuran_DH_suC"/>
</dbReference>
<dbReference type="InterPro" id="IPR036485">
    <property type="entry name" value="Glu_synth_asu_C_sf"/>
</dbReference>
<dbReference type="InterPro" id="IPR006657">
    <property type="entry name" value="MoPterin_dinucl-bd_dom"/>
</dbReference>
<dbReference type="NCBIfam" id="TIGR03122">
    <property type="entry name" value="one_C_dehyd_C"/>
    <property type="match status" value="1"/>
</dbReference>
<dbReference type="PANTHER" id="PTHR39673">
    <property type="entry name" value="TUNGSTEN FORMYLMETHANOFURAN DEHYDROGENASE, SUBUNIT C (FWDC)"/>
    <property type="match status" value="1"/>
</dbReference>
<dbReference type="PANTHER" id="PTHR39673:SF5">
    <property type="entry name" value="TUNGSTEN-CONTAINING FORMYLMETHANOFURAN DEHYDROGENASE 2 SUBUNIT C"/>
    <property type="match status" value="1"/>
</dbReference>
<dbReference type="Pfam" id="PF01568">
    <property type="entry name" value="Molydop_binding"/>
    <property type="match status" value="1"/>
</dbReference>
<dbReference type="PIRSF" id="PIRSF036633">
    <property type="entry name" value="FmdC_D"/>
    <property type="match status" value="1"/>
</dbReference>
<dbReference type="SUPFAM" id="SSF50692">
    <property type="entry name" value="ADC-like"/>
    <property type="match status" value="1"/>
</dbReference>
<dbReference type="SUPFAM" id="SSF69336">
    <property type="entry name" value="Alpha subunit of glutamate synthase, C-terminal domain"/>
    <property type="match status" value="1"/>
</dbReference>
<gene>
    <name type="primary">fmdC</name>
    <name type="ordered locus">MTH_918</name>
</gene>
<reference key="1">
    <citation type="journal article" date="1997" name="J. Bacteriol.">
        <title>Complete genome sequence of Methanobacterium thermoautotrophicum deltaH: functional analysis and comparative genomics.</title>
        <authorList>
            <person name="Smith D.R."/>
            <person name="Doucette-Stamm L.A."/>
            <person name="Deloughery C."/>
            <person name="Lee H.-M."/>
            <person name="Dubois J."/>
            <person name="Aldredge T."/>
            <person name="Bashirzadeh R."/>
            <person name="Blakely D."/>
            <person name="Cook R."/>
            <person name="Gilbert K."/>
            <person name="Harrison D."/>
            <person name="Hoang L."/>
            <person name="Keagle P."/>
            <person name="Lumm W."/>
            <person name="Pothier B."/>
            <person name="Qiu D."/>
            <person name="Spadafora R."/>
            <person name="Vicare R."/>
            <person name="Wang Y."/>
            <person name="Wierzbowski J."/>
            <person name="Gibson R."/>
            <person name="Jiwani N."/>
            <person name="Caruso A."/>
            <person name="Bush D."/>
            <person name="Safer H."/>
            <person name="Patwell D."/>
            <person name="Prabhakar S."/>
            <person name="McDougall S."/>
            <person name="Shimer G."/>
            <person name="Goyal A."/>
            <person name="Pietrovski S."/>
            <person name="Church G.M."/>
            <person name="Daniels C.J."/>
            <person name="Mao J.-I."/>
            <person name="Rice P."/>
            <person name="Noelling J."/>
            <person name="Reeve J.N."/>
        </authorList>
    </citation>
    <scope>NUCLEOTIDE SEQUENCE [LARGE SCALE GENOMIC DNA]</scope>
    <source>
        <strain>ATCC 29096 / DSM 1053 / JCM 10044 / NBRC 100330 / Delta H</strain>
    </source>
</reference>
<comment type="function">
    <text evidence="1">Catalyzes the reversible oxidation of CO(2) and methanofuran (MFR) to N-formylmethanofuran (CHO-MFR). Can only oxidize formylmethanofuran. This enzyme is oxygen-labile.</text>
</comment>
<comment type="catalytic activity">
    <reaction evidence="1">
        <text>N-formylmethanofuran + 2 oxidized [2Fe-2S]-[ferredoxin] + H2O = methanofuran + 2 reduced [2Fe-2S]-[ferredoxin] + CO2 + H(+)</text>
        <dbReference type="Rhea" id="RHEA:19841"/>
        <dbReference type="Rhea" id="RHEA-COMP:10000"/>
        <dbReference type="Rhea" id="RHEA-COMP:10001"/>
        <dbReference type="ChEBI" id="CHEBI:15377"/>
        <dbReference type="ChEBI" id="CHEBI:15378"/>
        <dbReference type="ChEBI" id="CHEBI:16526"/>
        <dbReference type="ChEBI" id="CHEBI:33737"/>
        <dbReference type="ChEBI" id="CHEBI:33738"/>
        <dbReference type="ChEBI" id="CHEBI:57727"/>
        <dbReference type="ChEBI" id="CHEBI:58151"/>
        <dbReference type="EC" id="1.2.7.12"/>
    </reaction>
</comment>
<comment type="activity regulation">
    <text>Inactivated by cyanide.</text>
</comment>
<comment type="pathway">
    <text>One-carbon metabolism; methanogenesis from CO(2); 5,10-methenyl-5,6,7,8-tetrahydromethanopterin from CO(2): step 1/3.</text>
</comment>
<comment type="subunit">
    <text>Consists of five subunits; FmdA, FmdB, FmdC, FmdD, and FmdE.</text>
</comment>
<comment type="induction">
    <text>By growth on molybdenum, under anaerobic conditions.</text>
</comment>
<comment type="similarity">
    <text evidence="2">In the N-terminal section; belongs to the FwdC/FmdC family.</text>
</comment>
<comment type="similarity">
    <text evidence="2">In the C-terminal section; belongs to the molybdenum dinucleotide binding protein family.</text>
</comment>
<accession>O27002</accession>
<keyword id="KW-0484">Methanogenesis</keyword>
<keyword id="KW-0560">Oxidoreductase</keyword>
<keyword id="KW-1185">Reference proteome</keyword>
<keyword id="KW-0677">Repeat</keyword>
<name>FMDC_METTH</name>
<organism>
    <name type="scientific">Methanothermobacter thermautotrophicus (strain ATCC 29096 / DSM 1053 / JCM 10044 / NBRC 100330 / Delta H)</name>
    <name type="common">Methanobacterium thermoautotrophicum</name>
    <dbReference type="NCBI Taxonomy" id="187420"/>
    <lineage>
        <taxon>Archaea</taxon>
        <taxon>Methanobacteriati</taxon>
        <taxon>Methanobacteriota</taxon>
        <taxon>Methanomada group</taxon>
        <taxon>Methanobacteria</taxon>
        <taxon>Methanobacteriales</taxon>
        <taxon>Methanobacteriaceae</taxon>
        <taxon>Methanothermobacter</taxon>
    </lineage>
</organism>
<proteinExistence type="evidence at transcript level"/>
<sequence length="400" mass="43288">MGFVLVPKSDFQIPLEADTIRPDLFEGLDLDEIRSLQVYEGNIKRPLGEFFEIAETPHADQLIRIDGDVSRVKYIGSGMKSGKIIINGDVGLQLGCEMKGGEIEVNGNVSSWIGMEMHGGTIKINGNAGDYVGCAYRGEWRGMKGGKIIIQGNAGNNIGGGMMAGEIYIGGDAGNFCGIRMNGGEITVRGDAGRAPGAEMVSGIIKIHGRISSLLPGFKEISTFKEDGSLMILFKGDLSEKNPEGNLYINYNKNLHILENETDEGRVITKKGIKVIYNSGSTIREGQIIKGGNKLTDDYIDECARCCISPEDYKLLGEPENVVVSSHGNEVVLRAVEDPGIQMGTIFIPRGIWANVLTPPYTESTGSPMYKGVPVYLRKASQGERILSAEELVEEYGVGK</sequence>